<reference key="1">
    <citation type="journal article" date="2004" name="Nat. Genet.">
        <title>Complete sequencing and characterization of 21,243 full-length human cDNAs.</title>
        <authorList>
            <person name="Ota T."/>
            <person name="Suzuki Y."/>
            <person name="Nishikawa T."/>
            <person name="Otsuki T."/>
            <person name="Sugiyama T."/>
            <person name="Irie R."/>
            <person name="Wakamatsu A."/>
            <person name="Hayashi K."/>
            <person name="Sato H."/>
            <person name="Nagai K."/>
            <person name="Kimura K."/>
            <person name="Makita H."/>
            <person name="Sekine M."/>
            <person name="Obayashi M."/>
            <person name="Nishi T."/>
            <person name="Shibahara T."/>
            <person name="Tanaka T."/>
            <person name="Ishii S."/>
            <person name="Yamamoto J."/>
            <person name="Saito K."/>
            <person name="Kawai Y."/>
            <person name="Isono Y."/>
            <person name="Nakamura Y."/>
            <person name="Nagahari K."/>
            <person name="Murakami K."/>
            <person name="Yasuda T."/>
            <person name="Iwayanagi T."/>
            <person name="Wagatsuma M."/>
            <person name="Shiratori A."/>
            <person name="Sudo H."/>
            <person name="Hosoiri T."/>
            <person name="Kaku Y."/>
            <person name="Kodaira H."/>
            <person name="Kondo H."/>
            <person name="Sugawara M."/>
            <person name="Takahashi M."/>
            <person name="Kanda K."/>
            <person name="Yokoi T."/>
            <person name="Furuya T."/>
            <person name="Kikkawa E."/>
            <person name="Omura Y."/>
            <person name="Abe K."/>
            <person name="Kamihara K."/>
            <person name="Katsuta N."/>
            <person name="Sato K."/>
            <person name="Tanikawa M."/>
            <person name="Yamazaki M."/>
            <person name="Ninomiya K."/>
            <person name="Ishibashi T."/>
            <person name="Yamashita H."/>
            <person name="Murakawa K."/>
            <person name="Fujimori K."/>
            <person name="Tanai H."/>
            <person name="Kimata M."/>
            <person name="Watanabe M."/>
            <person name="Hiraoka S."/>
            <person name="Chiba Y."/>
            <person name="Ishida S."/>
            <person name="Ono Y."/>
            <person name="Takiguchi S."/>
            <person name="Watanabe S."/>
            <person name="Yosida M."/>
            <person name="Hotuta T."/>
            <person name="Kusano J."/>
            <person name="Kanehori K."/>
            <person name="Takahashi-Fujii A."/>
            <person name="Hara H."/>
            <person name="Tanase T.-O."/>
            <person name="Nomura Y."/>
            <person name="Togiya S."/>
            <person name="Komai F."/>
            <person name="Hara R."/>
            <person name="Takeuchi K."/>
            <person name="Arita M."/>
            <person name="Imose N."/>
            <person name="Musashino K."/>
            <person name="Yuuki H."/>
            <person name="Oshima A."/>
            <person name="Sasaki N."/>
            <person name="Aotsuka S."/>
            <person name="Yoshikawa Y."/>
            <person name="Matsunawa H."/>
            <person name="Ichihara T."/>
            <person name="Shiohata N."/>
            <person name="Sano S."/>
            <person name="Moriya S."/>
            <person name="Momiyama H."/>
            <person name="Satoh N."/>
            <person name="Takami S."/>
            <person name="Terashima Y."/>
            <person name="Suzuki O."/>
            <person name="Nakagawa S."/>
            <person name="Senoh A."/>
            <person name="Mizoguchi H."/>
            <person name="Goto Y."/>
            <person name="Shimizu F."/>
            <person name="Wakebe H."/>
            <person name="Hishigaki H."/>
            <person name="Watanabe T."/>
            <person name="Sugiyama A."/>
            <person name="Takemoto M."/>
            <person name="Kawakami B."/>
            <person name="Yamazaki M."/>
            <person name="Watanabe K."/>
            <person name="Kumagai A."/>
            <person name="Itakura S."/>
            <person name="Fukuzumi Y."/>
            <person name="Fujimori Y."/>
            <person name="Komiyama M."/>
            <person name="Tashiro H."/>
            <person name="Tanigami A."/>
            <person name="Fujiwara T."/>
            <person name="Ono T."/>
            <person name="Yamada K."/>
            <person name="Fujii Y."/>
            <person name="Ozaki K."/>
            <person name="Hirao M."/>
            <person name="Ohmori Y."/>
            <person name="Kawabata A."/>
            <person name="Hikiji T."/>
            <person name="Kobatake N."/>
            <person name="Inagaki H."/>
            <person name="Ikema Y."/>
            <person name="Okamoto S."/>
            <person name="Okitani R."/>
            <person name="Kawakami T."/>
            <person name="Noguchi S."/>
            <person name="Itoh T."/>
            <person name="Shigeta K."/>
            <person name="Senba T."/>
            <person name="Matsumura K."/>
            <person name="Nakajima Y."/>
            <person name="Mizuno T."/>
            <person name="Morinaga M."/>
            <person name="Sasaki M."/>
            <person name="Togashi T."/>
            <person name="Oyama M."/>
            <person name="Hata H."/>
            <person name="Watanabe M."/>
            <person name="Komatsu T."/>
            <person name="Mizushima-Sugano J."/>
            <person name="Satoh T."/>
            <person name="Shirai Y."/>
            <person name="Takahashi Y."/>
            <person name="Nakagawa K."/>
            <person name="Okumura K."/>
            <person name="Nagase T."/>
            <person name="Nomura N."/>
            <person name="Kikuchi H."/>
            <person name="Masuho Y."/>
            <person name="Yamashita R."/>
            <person name="Nakai K."/>
            <person name="Yada T."/>
            <person name="Nakamura Y."/>
            <person name="Ohara O."/>
            <person name="Isogai T."/>
            <person name="Sugano S."/>
        </authorList>
    </citation>
    <scope>NUCLEOTIDE SEQUENCE [LARGE SCALE MRNA]</scope>
</reference>
<reference key="2">
    <citation type="journal article" date="2004" name="Genome Res.">
        <title>The status, quality, and expansion of the NIH full-length cDNA project: the Mammalian Gene Collection (MGC).</title>
        <authorList>
            <consortium name="The MGC Project Team"/>
        </authorList>
    </citation>
    <scope>NUCLEOTIDE SEQUENCE [LARGE SCALE MRNA]</scope>
    <source>
        <tissue>Ovary</tissue>
    </source>
</reference>
<reference key="3">
    <citation type="journal article" date="2003" name="J. Biol. Chem.">
        <title>Transcriptional repressor germ cell-less (GCL) and barrier to autointegration factor (BAF) compete for binding to emerin in vitro.</title>
        <authorList>
            <person name="Holaska J.M."/>
            <person name="Lee K.K."/>
            <person name="Kowalski A.K."/>
            <person name="Wilson K.L."/>
        </authorList>
    </citation>
    <scope>INTERACTION WITH EMD</scope>
</reference>
<proteinExistence type="evidence at protein level"/>
<gene>
    <name type="primary">GMCL1</name>
    <name type="synonym">BTBD13</name>
    <name type="synonym">GCL</name>
    <name type="synonym">SPATA29</name>
</gene>
<protein>
    <recommendedName>
        <fullName>Germ cell-less protein-like 1</fullName>
    </recommendedName>
    <alternativeName>
        <fullName>Spermatogenesis-associated protein 29</fullName>
    </alternativeName>
</protein>
<feature type="chain" id="PRO_0000087520" description="Germ cell-less protein-like 1">
    <location>
        <begin position="1"/>
        <end position="515"/>
    </location>
</feature>
<feature type="domain" description="BTB" evidence="4">
    <location>
        <begin position="108"/>
        <end position="178"/>
    </location>
</feature>
<feature type="region of interest" description="Disordered" evidence="5">
    <location>
        <begin position="1"/>
        <end position="35"/>
    </location>
</feature>
<feature type="region of interest" description="Disordered" evidence="5">
    <location>
        <begin position="65"/>
        <end position="85"/>
    </location>
</feature>
<feature type="short sequence motif" description="Nuclear localization signal" evidence="3">
    <location>
        <begin position="49"/>
        <end position="55"/>
    </location>
</feature>
<feature type="short sequence motif" description="Nuclear localization signal" evidence="3">
    <location>
        <begin position="85"/>
        <end position="91"/>
    </location>
</feature>
<feature type="compositionally biased region" description="Low complexity" evidence="5">
    <location>
        <begin position="11"/>
        <end position="29"/>
    </location>
</feature>
<feature type="compositionally biased region" description="Acidic residues" evidence="5">
    <location>
        <begin position="67"/>
        <end position="76"/>
    </location>
</feature>
<feature type="modified residue" description="Phosphoserine" evidence="2">
    <location>
        <position position="66"/>
    </location>
</feature>
<feature type="modified residue" description="Phosphothreonine" evidence="2">
    <location>
        <position position="68"/>
    </location>
</feature>
<feature type="sequence conflict" description="In Ref. 1; BAB14416." evidence="7" ref="1">
    <original>I</original>
    <variation>M</variation>
    <location>
        <position position="157"/>
    </location>
</feature>
<feature type="sequence conflict" description="In Ref. 1; BAB14796." evidence="7" ref="1">
    <original>E</original>
    <variation>G</variation>
    <location>
        <position position="160"/>
    </location>
</feature>
<feature type="sequence conflict" description="In Ref. 1; BAB14494." evidence="7" ref="1">
    <original>E</original>
    <variation>V</variation>
    <location>
        <position position="160"/>
    </location>
</feature>
<feature type="sequence conflict" description="In Ref. 1; BAB14796." evidence="7" ref="1">
    <original>T</original>
    <variation>A</variation>
    <location>
        <position position="207"/>
    </location>
</feature>
<feature type="sequence conflict" description="In Ref. 1; BAB14494." evidence="7" ref="1">
    <original>K</original>
    <variation>N</variation>
    <location>
        <position position="325"/>
    </location>
</feature>
<accession>Q96IK5</accession>
<accession>Q9H826</accession>
<accession>Q9H8V7</accession>
<accession>Q9H927</accession>
<dbReference type="EMBL" id="AK023119">
    <property type="protein sequence ID" value="BAB14416.1"/>
    <property type="molecule type" value="mRNA"/>
</dbReference>
<dbReference type="EMBL" id="AK023261">
    <property type="protein sequence ID" value="BAB14494.1"/>
    <property type="status" value="ALT_INIT"/>
    <property type="molecule type" value="mRNA"/>
</dbReference>
<dbReference type="EMBL" id="AK024042">
    <property type="protein sequence ID" value="BAB14796.1"/>
    <property type="molecule type" value="mRNA"/>
</dbReference>
<dbReference type="EMBL" id="BC007420">
    <property type="protein sequence ID" value="AAH07420.1"/>
    <property type="molecule type" value="mRNA"/>
</dbReference>
<dbReference type="CCDS" id="CCDS1895.1"/>
<dbReference type="RefSeq" id="NP_848526.1">
    <property type="nucleotide sequence ID" value="NM_178439.5"/>
</dbReference>
<dbReference type="SMR" id="Q96IK5"/>
<dbReference type="BioGRID" id="122152">
    <property type="interactions" value="163"/>
</dbReference>
<dbReference type="FunCoup" id="Q96IK5">
    <property type="interactions" value="3415"/>
</dbReference>
<dbReference type="IntAct" id="Q96IK5">
    <property type="interactions" value="129"/>
</dbReference>
<dbReference type="MINT" id="Q96IK5"/>
<dbReference type="STRING" id="9606.ENSP00000282570"/>
<dbReference type="GlyGen" id="Q96IK5">
    <property type="glycosylation" value="1 site, 1 O-linked glycan (1 site)"/>
</dbReference>
<dbReference type="iPTMnet" id="Q96IK5"/>
<dbReference type="PhosphoSitePlus" id="Q96IK5"/>
<dbReference type="BioMuta" id="GMCL1"/>
<dbReference type="DMDM" id="47605732"/>
<dbReference type="jPOST" id="Q96IK5"/>
<dbReference type="MassIVE" id="Q96IK5"/>
<dbReference type="PaxDb" id="9606-ENSP00000282570"/>
<dbReference type="PeptideAtlas" id="Q96IK5"/>
<dbReference type="ProteomicsDB" id="76838"/>
<dbReference type="Antibodypedia" id="48205">
    <property type="antibodies" value="63 antibodies from 15 providers"/>
</dbReference>
<dbReference type="DNASU" id="64395"/>
<dbReference type="Ensembl" id="ENST00000282570.4">
    <property type="protein sequence ID" value="ENSP00000282570.3"/>
    <property type="gene ID" value="ENSG00000087338.5"/>
</dbReference>
<dbReference type="GeneID" id="64395"/>
<dbReference type="KEGG" id="hsa:64395"/>
<dbReference type="MANE-Select" id="ENST00000282570.4">
    <property type="protein sequence ID" value="ENSP00000282570.3"/>
    <property type="RefSeq nucleotide sequence ID" value="NM_178439.5"/>
    <property type="RefSeq protein sequence ID" value="NP_848526.1"/>
</dbReference>
<dbReference type="UCSC" id="uc002sfu.4">
    <property type="organism name" value="human"/>
</dbReference>
<dbReference type="AGR" id="HGNC:23843"/>
<dbReference type="CTD" id="64395"/>
<dbReference type="DisGeNET" id="64395"/>
<dbReference type="GeneCards" id="GMCL1"/>
<dbReference type="HGNC" id="HGNC:23843">
    <property type="gene designation" value="GMCL1"/>
</dbReference>
<dbReference type="HPA" id="ENSG00000087338">
    <property type="expression patterns" value="Low tissue specificity"/>
</dbReference>
<dbReference type="MIM" id="618627">
    <property type="type" value="gene"/>
</dbReference>
<dbReference type="neXtProt" id="NX_Q96IK5"/>
<dbReference type="OpenTargets" id="ENSG00000087338"/>
<dbReference type="PharmGKB" id="PA143485477"/>
<dbReference type="VEuPathDB" id="HostDB:ENSG00000087338"/>
<dbReference type="eggNOG" id="KOG4682">
    <property type="taxonomic scope" value="Eukaryota"/>
</dbReference>
<dbReference type="GeneTree" id="ENSGT00940000156185"/>
<dbReference type="HOGENOM" id="CLU_025961_2_0_1"/>
<dbReference type="InParanoid" id="Q96IK5"/>
<dbReference type="OMA" id="TGFNYGM"/>
<dbReference type="OrthoDB" id="6359943at2759"/>
<dbReference type="PAN-GO" id="Q96IK5">
    <property type="GO annotations" value="1 GO annotation based on evolutionary models"/>
</dbReference>
<dbReference type="PhylomeDB" id="Q96IK5"/>
<dbReference type="TreeFam" id="TF316048"/>
<dbReference type="PathwayCommons" id="Q96IK5"/>
<dbReference type="SignaLink" id="Q96IK5"/>
<dbReference type="BioGRID-ORCS" id="64395">
    <property type="hits" value="13 hits in 1189 CRISPR screens"/>
</dbReference>
<dbReference type="ChiTaRS" id="GMCL1">
    <property type="organism name" value="human"/>
</dbReference>
<dbReference type="GenomeRNAi" id="64395"/>
<dbReference type="Pharos" id="Q96IK5">
    <property type="development level" value="Tbio"/>
</dbReference>
<dbReference type="PRO" id="PR:Q96IK5"/>
<dbReference type="Proteomes" id="UP000005640">
    <property type="component" value="Chromosome 2"/>
</dbReference>
<dbReference type="RNAct" id="Q96IK5">
    <property type="molecule type" value="protein"/>
</dbReference>
<dbReference type="Bgee" id="ENSG00000087338">
    <property type="expression patterns" value="Expressed in secondary oocyte and 178 other cell types or tissues"/>
</dbReference>
<dbReference type="ExpressionAtlas" id="Q96IK5">
    <property type="expression patterns" value="baseline and differential"/>
</dbReference>
<dbReference type="GO" id="GO:0016363">
    <property type="term" value="C:nuclear matrix"/>
    <property type="evidence" value="ECO:0007669"/>
    <property type="project" value="UniProtKB-SubCell"/>
</dbReference>
<dbReference type="GO" id="GO:0005634">
    <property type="term" value="C:nucleus"/>
    <property type="evidence" value="ECO:0000318"/>
    <property type="project" value="GO_Central"/>
</dbReference>
<dbReference type="GO" id="GO:0042802">
    <property type="term" value="F:identical protein binding"/>
    <property type="evidence" value="ECO:0000353"/>
    <property type="project" value="IntAct"/>
</dbReference>
<dbReference type="GO" id="GO:0007281">
    <property type="term" value="P:germ cell development"/>
    <property type="evidence" value="ECO:0007669"/>
    <property type="project" value="InterPro"/>
</dbReference>
<dbReference type="GO" id="GO:0007283">
    <property type="term" value="P:spermatogenesis"/>
    <property type="evidence" value="ECO:0007669"/>
    <property type="project" value="UniProtKB-KW"/>
</dbReference>
<dbReference type="CDD" id="cd18495">
    <property type="entry name" value="BACK_GCL"/>
    <property type="match status" value="1"/>
</dbReference>
<dbReference type="CDD" id="cd18305">
    <property type="entry name" value="BTB_POZ_GCL"/>
    <property type="match status" value="1"/>
</dbReference>
<dbReference type="FunFam" id="1.25.40.420:FF:000013">
    <property type="entry name" value="germ cell-less protein-like 1 isoform X1"/>
    <property type="match status" value="1"/>
</dbReference>
<dbReference type="FunFam" id="3.30.710.10:FF:000092">
    <property type="entry name" value="Germ cell-less, spermatogenesis associated 1"/>
    <property type="match status" value="1"/>
</dbReference>
<dbReference type="Gene3D" id="1.25.40.420">
    <property type="match status" value="1"/>
</dbReference>
<dbReference type="Gene3D" id="3.30.710.10">
    <property type="entry name" value="Potassium Channel Kv1.1, Chain A"/>
    <property type="match status" value="1"/>
</dbReference>
<dbReference type="InterPro" id="IPR011705">
    <property type="entry name" value="BACK"/>
</dbReference>
<dbReference type="InterPro" id="IPR000210">
    <property type="entry name" value="BTB/POZ_dom"/>
</dbReference>
<dbReference type="InterPro" id="IPR043380">
    <property type="entry name" value="Gcl-like"/>
</dbReference>
<dbReference type="InterPro" id="IPR011333">
    <property type="entry name" value="SKP1/BTB/POZ_sf"/>
</dbReference>
<dbReference type="PANTHER" id="PTHR23231">
    <property type="entry name" value="GERM CELL-LESS PROTEIN"/>
    <property type="match status" value="1"/>
</dbReference>
<dbReference type="PANTHER" id="PTHR23231:SF19">
    <property type="entry name" value="GERM CELL-LESS PROTEIN-LIKE 1"/>
    <property type="match status" value="1"/>
</dbReference>
<dbReference type="Pfam" id="PF07707">
    <property type="entry name" value="BACK"/>
    <property type="match status" value="1"/>
</dbReference>
<dbReference type="Pfam" id="PF00651">
    <property type="entry name" value="BTB"/>
    <property type="match status" value="1"/>
</dbReference>
<dbReference type="SMART" id="SM00875">
    <property type="entry name" value="BACK"/>
    <property type="match status" value="1"/>
</dbReference>
<dbReference type="SMART" id="SM00225">
    <property type="entry name" value="BTB"/>
    <property type="match status" value="1"/>
</dbReference>
<dbReference type="SUPFAM" id="SSF54695">
    <property type="entry name" value="POZ domain"/>
    <property type="match status" value="1"/>
</dbReference>
<dbReference type="PROSITE" id="PS50097">
    <property type="entry name" value="BTB"/>
    <property type="match status" value="1"/>
</dbReference>
<evidence type="ECO:0000250" key="1"/>
<evidence type="ECO:0000250" key="2">
    <source>
        <dbReference type="UniProtKB" id="Q920G9"/>
    </source>
</evidence>
<evidence type="ECO:0000255" key="3"/>
<evidence type="ECO:0000255" key="4">
    <source>
        <dbReference type="PROSITE-ProRule" id="PRU00037"/>
    </source>
</evidence>
<evidence type="ECO:0000256" key="5">
    <source>
        <dbReference type="SAM" id="MobiDB-lite"/>
    </source>
</evidence>
<evidence type="ECO:0000269" key="6">
    <source>
    </source>
</evidence>
<evidence type="ECO:0000305" key="7"/>
<name>GMCL1_HUMAN</name>
<keyword id="KW-0217">Developmental protein</keyword>
<keyword id="KW-0221">Differentiation</keyword>
<keyword id="KW-0539">Nucleus</keyword>
<keyword id="KW-0597">Phosphoprotein</keyword>
<keyword id="KW-1267">Proteomics identification</keyword>
<keyword id="KW-1185">Reference proteome</keyword>
<keyword id="KW-0744">Spermatogenesis</keyword>
<sequence>MGSLSSRVLRQPRPALAQQAQGARAGGSARRPDTGDDAAGHGFCYCAGSHKRKRSSGSFCYCHPDSETDEDEEEGDEQQRLLNTPRRKKLKSTSKYIYQTLFLNGENSDIKICALGEEWSLHKIYLCQSGYFSSMFSGSWKESSMNIIELEIPDQNIDVEALQVAFGSLYRDDVLIKPSRVVAILAAACLLQLDGLIQQCGETMKETVNVKTVCGYYTSAGTYGLDSVKKKCLEWLLNNLMTHQNVELFKELSINVMKQLIGSSNLFVMQVEMDIYTALKKWMFLQLVPSWNGSLKQLLTETDVWFSKQRKDFEGMAFLETEQGKPFVSVFRHLRLQYIISDLASARIIEQDAVVPSEWLSSVYKQQWFAMLRAEQDSEVGPQEINKEELEGNSMRCGRKLAKDGEYCWRWTGFNFGFDLLVTYTNRYIIFKRNTLNQPCSGSVSLQPRRSIAFRLRLASFDSSGKLICSRTTGYQILTLEKDQEQVVMNLDSRLLIFPLYICCNFLYISPEKKN</sequence>
<comment type="function">
    <text evidence="1">Possible function in spermatogenesis. Enhances the degradation of MDM2 and increases the amount of p53 probably by modulating the nucleocytoplasmic transport (By similarity).</text>
</comment>
<comment type="subunit">
    <text evidence="1 6">Interacts with TMPO-beta, TSG101 and TFDP2 (By similarity). Interacts with EMD.</text>
</comment>
<comment type="interaction">
    <interactant intactId="EBI-2548508">
        <id>Q96IK5</id>
    </interactant>
    <interactant intactId="EBI-11574440">
        <id>Q9BWW8</id>
        <label>APOL6</label>
    </interactant>
    <organismsDiffer>false</organismsDiffer>
    <experiments>3</experiments>
</comment>
<comment type="interaction">
    <interactant intactId="EBI-2548508">
        <id>Q96IK5</id>
    </interactant>
    <interactant intactId="EBI-16429430">
        <id>A0A0S2Z4M1</id>
        <label>AXIN1</label>
    </interactant>
    <organismsDiffer>false</organismsDiffer>
    <experiments>3</experiments>
</comment>
<comment type="interaction">
    <interactant intactId="EBI-2548508">
        <id>Q96IK5</id>
    </interactant>
    <interactant intactId="EBI-742722">
        <id>Q9BUH8</id>
        <label>BEGAIN</label>
    </interactant>
    <organismsDiffer>false</organismsDiffer>
    <experiments>5</experiments>
</comment>
<comment type="interaction">
    <interactant intactId="EBI-2548508">
        <id>Q96IK5</id>
    </interactant>
    <interactant intactId="EBI-11532900">
        <id>J3KQ12</id>
        <label>BSCL2</label>
    </interactant>
    <organismsDiffer>false</organismsDiffer>
    <experiments>3</experiments>
</comment>
<comment type="interaction">
    <interactant intactId="EBI-2548508">
        <id>Q96IK5</id>
    </interactant>
    <interactant intactId="EBI-358049">
        <id>Q13895</id>
        <label>BYSL</label>
    </interactant>
    <organismsDiffer>false</organismsDiffer>
    <experiments>5</experiments>
</comment>
<comment type="interaction">
    <interactant intactId="EBI-2548508">
        <id>Q96IK5</id>
    </interactant>
    <interactant intactId="EBI-10961312">
        <id>Q8IYE1</id>
        <label>CCDC13</label>
    </interactant>
    <organismsDiffer>false</organismsDiffer>
    <experiments>5</experiments>
</comment>
<comment type="interaction">
    <interactant intactId="EBI-2548508">
        <id>Q96IK5</id>
    </interactant>
    <interactant intactId="EBI-295634">
        <id>Q16543</id>
        <label>CDC37</label>
    </interactant>
    <organismsDiffer>false</organismsDiffer>
    <experiments>3</experiments>
</comment>
<comment type="interaction">
    <interactant intactId="EBI-2548508">
        <id>Q96IK5</id>
    </interactant>
    <interactant intactId="EBI-11943144">
        <id>O43822-4</id>
        <label>CFAP410</label>
    </interactant>
    <organismsDiffer>false</organismsDiffer>
    <experiments>3</experiments>
</comment>
<comment type="interaction">
    <interactant intactId="EBI-2548508">
        <id>Q96IK5</id>
    </interactant>
    <interactant intactId="EBI-741528">
        <id>Q9UKJ5</id>
        <label>CHIC2</label>
    </interactant>
    <organismsDiffer>false</organismsDiffer>
    <experiments>3</experiments>
</comment>
<comment type="interaction">
    <interactant intactId="EBI-2548508">
        <id>Q96IK5</id>
    </interactant>
    <interactant intactId="EBI-10292696">
        <id>Q96Q77</id>
        <label>CIB3</label>
    </interactant>
    <organismsDiffer>false</organismsDiffer>
    <experiments>3</experiments>
</comment>
<comment type="interaction">
    <interactant intactId="EBI-2548508">
        <id>Q96IK5</id>
    </interactant>
    <interactant intactId="EBI-456129">
        <id>Q13618</id>
        <label>CUL3</label>
    </interactant>
    <organismsDiffer>false</organismsDiffer>
    <experiments>5</experiments>
</comment>
<comment type="interaction">
    <interactant intactId="EBI-2548508">
        <id>Q96IK5</id>
    </interactant>
    <interactant intactId="EBI-77321">
        <id>Q9UER7</id>
        <label>DAXX</label>
    </interactant>
    <organismsDiffer>false</organismsDiffer>
    <experiments>3</experiments>
</comment>
<comment type="interaction">
    <interactant intactId="EBI-2548508">
        <id>Q96IK5</id>
    </interactant>
    <interactant intactId="EBI-2339219">
        <id>Q08426</id>
        <label>EHHADH</label>
    </interactant>
    <organismsDiffer>false</organismsDiffer>
    <experiments>3</experiments>
</comment>
<comment type="interaction">
    <interactant intactId="EBI-2548508">
        <id>Q96IK5</id>
    </interactant>
    <interactant intactId="EBI-742350">
        <id>Q14241</id>
        <label>ELOA</label>
    </interactant>
    <organismsDiffer>false</organismsDiffer>
    <experiments>3</experiments>
</comment>
<comment type="interaction">
    <interactant intactId="EBI-2548508">
        <id>Q96IK5</id>
    </interactant>
    <interactant intactId="EBI-1052278">
        <id>O60645</id>
        <label>EXOC3</label>
    </interactant>
    <organismsDiffer>false</organismsDiffer>
    <experiments>3</experiments>
</comment>
<comment type="interaction">
    <interactant intactId="EBI-2548508">
        <id>Q96IK5</id>
    </interactant>
    <interactant intactId="EBI-10290462">
        <id>Q96KS9</id>
        <label>FAM167A</label>
    </interactant>
    <organismsDiffer>false</organismsDiffer>
    <experiments>8</experiments>
</comment>
<comment type="interaction">
    <interactant intactId="EBI-2548508">
        <id>Q96IK5</id>
    </interactant>
    <interactant intactId="EBI-742802">
        <id>Q9Y247</id>
        <label>FAM50B</label>
    </interactant>
    <organismsDiffer>false</organismsDiffer>
    <experiments>3</experiments>
</comment>
<comment type="interaction">
    <interactant intactId="EBI-2548508">
        <id>Q96IK5</id>
    </interactant>
    <interactant intactId="EBI-719415">
        <id>Q4VC44</id>
        <label>FLYWCH1</label>
    </interactant>
    <organismsDiffer>false</organismsDiffer>
    <experiments>3</experiments>
</comment>
<comment type="interaction">
    <interactant intactId="EBI-2548508">
        <id>Q96IK5</id>
    </interactant>
    <interactant intactId="EBI-10253815">
        <id>Q6PIV2</id>
        <label>FOXR1</label>
    </interactant>
    <organismsDiffer>false</organismsDiffer>
    <experiments>3</experiments>
</comment>
<comment type="interaction">
    <interactant intactId="EBI-2548508">
        <id>Q96IK5</id>
    </interactant>
    <interactant intactId="EBI-22578224">
        <id>A0A158RFV5</id>
        <label>GAGE1</label>
    </interactant>
    <organismsDiffer>false</organismsDiffer>
    <experiments>5</experiments>
</comment>
<comment type="interaction">
    <interactant intactId="EBI-2548508">
        <id>Q96IK5</id>
    </interactant>
    <interactant intactId="EBI-12281306">
        <id>A6NGK3</id>
        <label>GAGE10</label>
    </interactant>
    <organismsDiffer>false</organismsDiffer>
    <experiments>4</experiments>
</comment>
<comment type="interaction">
    <interactant intactId="EBI-2548508">
        <id>Q96IK5</id>
    </interactant>
    <interactant intactId="EBI-12329121">
        <id>Q13066</id>
        <label>GAGE2C</label>
    </interactant>
    <organismsDiffer>false</organismsDiffer>
    <experiments>6</experiments>
</comment>
<comment type="interaction">
    <interactant intactId="EBI-2548508">
        <id>Q96IK5</id>
    </interactant>
    <interactant intactId="EBI-745702">
        <id>Q13069</id>
        <label>GAGE5</label>
    </interactant>
    <organismsDiffer>false</organismsDiffer>
    <experiments>6</experiments>
</comment>
<comment type="interaction">
    <interactant intactId="EBI-2548508">
        <id>Q96IK5</id>
    </interactant>
    <interactant intactId="EBI-2548508">
        <id>Q96IK5</id>
        <label>GMCL1</label>
    </interactant>
    <organismsDiffer>false</organismsDiffer>
    <experiments>6</experiments>
</comment>
<comment type="interaction">
    <interactant intactId="EBI-2548508">
        <id>Q96IK5</id>
    </interactant>
    <interactant intactId="EBI-10236738">
        <id>A0A0C4DGM4</id>
        <label>HYKK</label>
    </interactant>
    <organismsDiffer>false</organismsDiffer>
    <experiments>5</experiments>
</comment>
<comment type="interaction">
    <interactant intactId="EBI-2548508">
        <id>Q96IK5</id>
    </interactant>
    <interactant intactId="EBI-2556193">
        <id>Q63ZY3</id>
        <label>KANK2</label>
    </interactant>
    <organismsDiffer>false</organismsDiffer>
    <experiments>3</experiments>
</comment>
<comment type="interaction">
    <interactant intactId="EBI-2548508">
        <id>Q96IK5</id>
    </interactant>
    <interactant intactId="EBI-399080">
        <id>Q92993</id>
        <label>KAT5</label>
    </interactant>
    <organismsDiffer>false</organismsDiffer>
    <experiments>5</experiments>
</comment>
<comment type="interaction">
    <interactant intactId="EBI-2548508">
        <id>Q96IK5</id>
    </interactant>
    <interactant intactId="EBI-14069005">
        <id>Q9BVG8-5</id>
        <label>KIFC3</label>
    </interactant>
    <organismsDiffer>false</organismsDiffer>
    <experiments>3</experiments>
</comment>
<comment type="interaction">
    <interactant intactId="EBI-2548508">
        <id>Q96IK5</id>
    </interactant>
    <interactant intactId="EBI-2949715">
        <id>O95678</id>
        <label>KRT75</label>
    </interactant>
    <organismsDiffer>false</organismsDiffer>
    <experiments>3</experiments>
</comment>
<comment type="interaction">
    <interactant intactId="EBI-2548508">
        <id>Q96IK5</id>
    </interactant>
    <interactant intactId="EBI-739832">
        <id>Q8TBB1</id>
        <label>LNX1</label>
    </interactant>
    <organismsDiffer>false</organismsDiffer>
    <experiments>3</experiments>
</comment>
<comment type="interaction">
    <interactant intactId="EBI-2548508">
        <id>Q96IK5</id>
    </interactant>
    <interactant intactId="EBI-1048159">
        <id>P55081</id>
        <label>MFAP1</label>
    </interactant>
    <organismsDiffer>false</organismsDiffer>
    <experiments>3</experiments>
</comment>
<comment type="interaction">
    <interactant intactId="EBI-2548508">
        <id>Q96IK5</id>
    </interactant>
    <interactant intactId="EBI-2340316">
        <id>O15344</id>
        <label>MID1</label>
    </interactant>
    <organismsDiffer>false</organismsDiffer>
    <experiments>10</experiments>
</comment>
<comment type="interaction">
    <interactant intactId="EBI-2548508">
        <id>Q96IK5</id>
    </interactant>
    <interactant intactId="EBI-10172526">
        <id>Q9UJV3-2</id>
        <label>MID2</label>
    </interactant>
    <organismsDiffer>false</organismsDiffer>
    <experiments>5</experiments>
</comment>
<comment type="interaction">
    <interactant intactId="EBI-2548508">
        <id>Q96IK5</id>
    </interactant>
    <interactant intactId="EBI-12382151">
        <id>Q8N5J2-3</id>
        <label>MINDY1</label>
    </interactant>
    <organismsDiffer>false</organismsDiffer>
    <experiments>3</experiments>
</comment>
<comment type="interaction">
    <interactant intactId="EBI-2548508">
        <id>Q96IK5</id>
    </interactant>
    <interactant intactId="EBI-10288852">
        <id>Q9UBU8-2</id>
        <label>MORF4L1</label>
    </interactant>
    <organismsDiffer>false</organismsDiffer>
    <experiments>3</experiments>
</comment>
<comment type="interaction">
    <interactant intactId="EBI-2548508">
        <id>Q96IK5</id>
    </interactant>
    <interactant intactId="EBI-6952711">
        <id>Q8WY64</id>
        <label>MYLIP</label>
    </interactant>
    <organismsDiffer>false</organismsDiffer>
    <experiments>3</experiments>
</comment>
<comment type="interaction">
    <interactant intactId="EBI-2548508">
        <id>Q96IK5</id>
    </interactant>
    <interactant intactId="EBI-14093244">
        <id>Q9ULV0-2</id>
        <label>MYO5B</label>
    </interactant>
    <organismsDiffer>false</organismsDiffer>
    <experiments>3</experiments>
</comment>
<comment type="interaction">
    <interactant intactId="EBI-2548508">
        <id>Q96IK5</id>
    </interactant>
    <interactant intactId="EBI-3951858">
        <id>Q16649</id>
        <label>NFIL3</label>
    </interactant>
    <organismsDiffer>false</organismsDiffer>
    <experiments>3</experiments>
</comment>
<comment type="interaction">
    <interactant intactId="EBI-2548508">
        <id>Q96IK5</id>
    </interactant>
    <interactant intactId="EBI-295391">
        <id>Q9BYG5</id>
        <label>PARD6B</label>
    </interactant>
    <organismsDiffer>false</organismsDiffer>
    <experiments>3</experiments>
</comment>
<comment type="interaction">
    <interactant intactId="EBI-2548508">
        <id>Q96IK5</id>
    </interactant>
    <interactant intactId="EBI-10240813">
        <id>Q3KNR5</id>
        <label>PAX4</label>
    </interactant>
    <organismsDiffer>false</organismsDiffer>
    <experiments>6</experiments>
</comment>
<comment type="interaction">
    <interactant intactId="EBI-2548508">
        <id>Q96IK5</id>
    </interactant>
    <interactant intactId="EBI-740845">
        <id>Q96AQ6</id>
        <label>PBXIP1</label>
    </interactant>
    <organismsDiffer>false</organismsDiffer>
    <experiments>8</experiments>
</comment>
<comment type="interaction">
    <interactant intactId="EBI-2548508">
        <id>Q96IK5</id>
    </interactant>
    <interactant intactId="EBI-14066006">
        <id>Q4G0R1</id>
        <label>PIBF1</label>
    </interactant>
    <organismsDiffer>false</organismsDiffer>
    <experiments>3</experiments>
</comment>
<comment type="interaction">
    <interactant intactId="EBI-2548508">
        <id>Q96IK5</id>
    </interactant>
    <interactant intactId="EBI-10232538">
        <id>Q8WWB5</id>
        <label>PIH1D2</label>
    </interactant>
    <organismsDiffer>false</organismsDiffer>
    <experiments>3</experiments>
</comment>
<comment type="interaction">
    <interactant intactId="EBI-2548508">
        <id>Q96IK5</id>
    </interactant>
    <interactant intactId="EBI-2557469">
        <id>Q6NYC8</id>
        <label>PPP1R18</label>
    </interactant>
    <organismsDiffer>false</organismsDiffer>
    <experiments>3</experiments>
</comment>
<comment type="interaction">
    <interactant intactId="EBI-2548508">
        <id>Q96IK5</id>
    </interactant>
    <interactant intactId="EBI-21251460">
        <id>O60260-5</id>
        <label>PRKN</label>
    </interactant>
    <organismsDiffer>false</organismsDiffer>
    <experiments>3</experiments>
</comment>
<comment type="interaction">
    <interactant intactId="EBI-2548508">
        <id>Q96IK5</id>
    </interactant>
    <interactant intactId="EBI-2798416">
        <id>Q99633</id>
        <label>PRPF18</label>
    </interactant>
    <organismsDiffer>false</organismsDiffer>
    <experiments>3</experiments>
</comment>
<comment type="interaction">
    <interactant intactId="EBI-2548508">
        <id>Q96IK5</id>
    </interactant>
    <interactant intactId="EBI-12281408">
        <id>P35236-2</id>
        <label>PTPN7</label>
    </interactant>
    <organismsDiffer>false</organismsDiffer>
    <experiments>3</experiments>
</comment>
<comment type="interaction">
    <interactant intactId="EBI-2548508">
        <id>Q96IK5</id>
    </interactant>
    <interactant intactId="EBI-2798044">
        <id>Q2TAL8</id>
        <label>QRICH1</label>
    </interactant>
    <organismsDiffer>false</organismsDiffer>
    <experiments>5</experiments>
</comment>
<comment type="interaction">
    <interactant intactId="EBI-2548508">
        <id>Q96IK5</id>
    </interactant>
    <interactant intactId="EBI-1026476">
        <id>P20936</id>
        <label>RASA1</label>
    </interactant>
    <organismsDiffer>false</organismsDiffer>
    <experiments>3</experiments>
</comment>
<comment type="interaction">
    <interactant intactId="EBI-2548508">
        <id>Q96IK5</id>
    </interactant>
    <interactant intactId="EBI-2340927">
        <id>P78317</id>
        <label>RNF4</label>
    </interactant>
    <organismsDiffer>false</organismsDiffer>
    <experiments>5</experiments>
</comment>
<comment type="interaction">
    <interactant intactId="EBI-2548508">
        <id>Q96IK5</id>
    </interactant>
    <interactant intactId="EBI-877832">
        <id>O43148</id>
        <label>RNMT</label>
    </interactant>
    <organismsDiffer>false</organismsDiffer>
    <experiments>3</experiments>
</comment>
<comment type="interaction">
    <interactant intactId="EBI-2548508">
        <id>Q96IK5</id>
    </interactant>
    <interactant intactId="EBI-2515568">
        <id>Q6PI26</id>
        <label>SHQ1</label>
    </interactant>
    <organismsDiffer>false</organismsDiffer>
    <experiments>3</experiments>
</comment>
<comment type="interaction">
    <interactant intactId="EBI-2548508">
        <id>Q96IK5</id>
    </interactant>
    <interactant intactId="EBI-10246152">
        <id>Q5T7P8-2</id>
        <label>SYT6</label>
    </interactant>
    <organismsDiffer>false</organismsDiffer>
    <experiments>3</experiments>
</comment>
<comment type="interaction">
    <interactant intactId="EBI-2548508">
        <id>Q96IK5</id>
    </interactant>
    <interactant intactId="EBI-1644036">
        <id>Q86TI0</id>
        <label>TBC1D1</label>
    </interactant>
    <organismsDiffer>false</organismsDiffer>
    <experiments>3</experiments>
</comment>
<comment type="interaction">
    <interactant intactId="EBI-2548508">
        <id>Q96IK5</id>
    </interactant>
    <interactant intactId="EBI-1047967">
        <id>Q86UE8</id>
        <label>TLK2</label>
    </interactant>
    <organismsDiffer>false</organismsDiffer>
    <experiments>3</experiments>
</comment>
<comment type="interaction">
    <interactant intactId="EBI-2548508">
        <id>Q96IK5</id>
    </interactant>
    <interactant intactId="EBI-81290">
        <id>P19474</id>
        <label>TRIM21</label>
    </interactant>
    <organismsDiffer>false</organismsDiffer>
    <experiments>3</experiments>
</comment>
<comment type="interaction">
    <interactant intactId="EBI-2548508">
        <id>Q96IK5</id>
    </interactant>
    <interactant intactId="EBI-80168">
        <id>P63279</id>
        <label>UBE2I</label>
    </interactant>
    <organismsDiffer>false</organismsDiffer>
    <experiments>4</experiments>
</comment>
<comment type="interaction">
    <interactant intactId="EBI-2548508">
        <id>Q96IK5</id>
    </interactant>
    <interactant intactId="EBI-10180829">
        <id>Q7KZS0</id>
        <label>UBE2I</label>
    </interactant>
    <organismsDiffer>false</organismsDiffer>
    <experiments>3</experiments>
</comment>
<comment type="interaction">
    <interactant intactId="EBI-2548508">
        <id>Q96IK5</id>
    </interactant>
    <interactant intactId="EBI-750167">
        <id>Q96GT9</id>
        <label>XAGE2</label>
    </interactant>
    <organismsDiffer>false</organismsDiffer>
    <experiments>7</experiments>
</comment>
<comment type="interaction">
    <interactant intactId="EBI-2548508">
        <id>Q96IK5</id>
    </interactant>
    <interactant intactId="EBI-6448284">
        <id>Q8WTP9</id>
        <label>XAGE3</label>
    </interactant>
    <organismsDiffer>false</organismsDiffer>
    <experiments>7</experiments>
</comment>
<comment type="interaction">
    <interactant intactId="EBI-2548508">
        <id>Q96IK5</id>
    </interactant>
    <interactant intactId="EBI-765538">
        <id>P25490</id>
        <label>YY1</label>
    </interactant>
    <organismsDiffer>false</organismsDiffer>
    <experiments>5</experiments>
</comment>
<comment type="interaction">
    <interactant intactId="EBI-2548508">
        <id>Q96IK5</id>
    </interactant>
    <interactant intactId="EBI-744471">
        <id>O43167</id>
        <label>ZBTB24</label>
    </interactant>
    <organismsDiffer>false</organismsDiffer>
    <experiments>3</experiments>
</comment>
<comment type="interaction">
    <interactant intactId="EBI-2548508">
        <id>Q96IK5</id>
    </interactant>
    <interactant intactId="EBI-11962760">
        <id>Q9NZV7</id>
        <label>ZIM2</label>
    </interactant>
    <organismsDiffer>false</organismsDiffer>
    <experiments>3</experiments>
</comment>
<comment type="interaction">
    <interactant intactId="EBI-2548508">
        <id>Q96IK5</id>
    </interactant>
    <interactant intactId="EBI-2797576">
        <id>Q9UBW7</id>
        <label>ZMYM2</label>
    </interactant>
    <organismsDiffer>false</organismsDiffer>
    <experiments>3</experiments>
</comment>
<comment type="interaction">
    <interactant intactId="EBI-2548508">
        <id>Q96IK5</id>
    </interactant>
    <interactant intactId="EBI-5657766">
        <id>P17027</id>
        <label>ZNF23</label>
    </interactant>
    <organismsDiffer>false</organismsDiffer>
    <experiments>3</experiments>
</comment>
<comment type="interaction">
    <interactant intactId="EBI-2548508">
        <id>Q96IK5</id>
    </interactant>
    <interactant intactId="EBI-5235554">
        <id>Q96MP5</id>
        <label>ZSWIM3</label>
    </interactant>
    <organismsDiffer>false</organismsDiffer>
    <experiments>3</experiments>
</comment>
<comment type="interaction">
    <interactant intactId="EBI-2548508">
        <id>Q96IK5</id>
    </interactant>
    <interactant intactId="EBI-10211777">
        <id>A0A384ME25</id>
    </interactant>
    <organismsDiffer>false</organismsDiffer>
    <experiments>3</experiments>
</comment>
<comment type="subcellular location">
    <subcellularLocation>
        <location evidence="1">Nucleus matrix</location>
    </subcellularLocation>
</comment>
<comment type="sequence caution" evidence="7">
    <conflict type="erroneous initiation">
        <sequence resource="EMBL-CDS" id="BAB14494"/>
    </conflict>
</comment>
<organism>
    <name type="scientific">Homo sapiens</name>
    <name type="common">Human</name>
    <dbReference type="NCBI Taxonomy" id="9606"/>
    <lineage>
        <taxon>Eukaryota</taxon>
        <taxon>Metazoa</taxon>
        <taxon>Chordata</taxon>
        <taxon>Craniata</taxon>
        <taxon>Vertebrata</taxon>
        <taxon>Euteleostomi</taxon>
        <taxon>Mammalia</taxon>
        <taxon>Eutheria</taxon>
        <taxon>Euarchontoglires</taxon>
        <taxon>Primates</taxon>
        <taxon>Haplorrhini</taxon>
        <taxon>Catarrhini</taxon>
        <taxon>Hominidae</taxon>
        <taxon>Homo</taxon>
    </lineage>
</organism>